<keyword id="KW-0002">3D-structure</keyword>
<keyword id="KW-0963">Cytoplasm</keyword>
<keyword id="KW-1015">Disulfide bond</keyword>
<keyword id="KW-0378">Hydrolase</keyword>
<keyword id="KW-0419">Kinetoplast</keyword>
<keyword id="KW-0449">Lipoprotein</keyword>
<keyword id="KW-0488">Methylation</keyword>
<keyword id="KW-0496">Mitochondrion</keyword>
<keyword id="KW-0636">Prenylation</keyword>
<keyword id="KW-0904">Protein phosphatase</keyword>
<keyword id="KW-1185">Reference proteome</keyword>
<keyword id="KW-0964">Secreted</keyword>
<keyword id="KW-0843">Virulence</keyword>
<proteinExistence type="evidence at protein level"/>
<gene>
    <name evidence="4" type="primary">PRL-1</name>
    <name evidence="8" type="ORF">LMJF_16_0230</name>
</gene>
<organism evidence="9">
    <name type="scientific">Leishmania major</name>
    <dbReference type="NCBI Taxonomy" id="5664"/>
    <lineage>
        <taxon>Eukaryota</taxon>
        <taxon>Discoba</taxon>
        <taxon>Euglenozoa</taxon>
        <taxon>Kinetoplastea</taxon>
        <taxon>Metakinetoplastina</taxon>
        <taxon>Trypanosomatida</taxon>
        <taxon>Trypanosomatidae</taxon>
        <taxon>Leishmaniinae</taxon>
        <taxon>Leishmania</taxon>
    </lineage>
</organism>
<comment type="function">
    <text evidence="2">Has protein tyrosine phosphatase activity and may act as a virulence factor to support intracellular survival in host macrophages.</text>
</comment>
<comment type="catalytic activity">
    <reaction evidence="2">
        <text>O-phospho-L-tyrosyl-[protein] + H2O = L-tyrosyl-[protein] + phosphate</text>
        <dbReference type="Rhea" id="RHEA:10684"/>
        <dbReference type="Rhea" id="RHEA-COMP:10136"/>
        <dbReference type="Rhea" id="RHEA-COMP:20101"/>
        <dbReference type="ChEBI" id="CHEBI:15377"/>
        <dbReference type="ChEBI" id="CHEBI:43474"/>
        <dbReference type="ChEBI" id="CHEBI:46858"/>
        <dbReference type="ChEBI" id="CHEBI:61978"/>
        <dbReference type="EC" id="3.1.3.48"/>
    </reaction>
</comment>
<comment type="activity regulation">
    <text evidence="2">Activated in a reduced environment which promotes the reduction of the disulfide bond between the regulatory Cys-53 and catalytic Cys-114 residues.</text>
</comment>
<comment type="biophysicochemical properties">
    <phDependence>
        <text evidence="2">Optimum pH is 6.</text>
    </phDependence>
</comment>
<comment type="subcellular location">
    <subcellularLocation>
        <location evidence="2">Cytoplasm</location>
    </subcellularLocation>
    <subcellularLocation>
        <location evidence="2">Mitochondrion matrix</location>
        <location evidence="2">Kinetoplast</location>
    </subcellularLocation>
    <subcellularLocation>
        <location evidence="2">Secreted</location>
        <location evidence="2">Extracellular exosome</location>
    </subcellularLocation>
    <subcellularLocation>
        <location evidence="2">Secreted</location>
    </subcellularLocation>
    <text evidence="2">Enriched around the kinetoplast.</text>
</comment>
<comment type="developmental stage">
    <text evidence="2">Expressed at the promastigote life cycle stage during the logarithmic growth and the stationary phase (at protein level). Expressed at lower levels at the amastigote life cycle stage (at protein level).</text>
</comment>
<comment type="similarity">
    <text evidence="5">Belongs to the protein-tyrosine phosphatase family.</text>
</comment>
<reference evidence="9" key="1">
    <citation type="journal article" date="2005" name="Science">
        <title>The genome of the kinetoplastid parasite, Leishmania major.</title>
        <authorList>
            <person name="Ivens A.C."/>
            <person name="Peacock C.S."/>
            <person name="Worthey E.A."/>
            <person name="Murphy L."/>
            <person name="Aggarwal G."/>
            <person name="Berriman M."/>
            <person name="Sisk E."/>
            <person name="Rajandream M.A."/>
            <person name="Adlem E."/>
            <person name="Aert R."/>
            <person name="Anupama A."/>
            <person name="Apostolou Z."/>
            <person name="Attipoe P."/>
            <person name="Bason N."/>
            <person name="Bauser C."/>
            <person name="Beck A."/>
            <person name="Beverley S.M."/>
            <person name="Bianchettin G."/>
            <person name="Borzym K."/>
            <person name="Bothe G."/>
            <person name="Bruschi C.V."/>
            <person name="Collins M."/>
            <person name="Cadag E."/>
            <person name="Ciarloni L."/>
            <person name="Clayton C."/>
            <person name="Coulson R.M.R."/>
            <person name="Cronin A."/>
            <person name="Cruz A.K."/>
            <person name="Davies R.M."/>
            <person name="De Gaudenzi J."/>
            <person name="Dobson D.E."/>
            <person name="Duesterhoeft A."/>
            <person name="Fazelina G."/>
            <person name="Fosker N."/>
            <person name="Frasch A.C."/>
            <person name="Fraser A."/>
            <person name="Fuchs M."/>
            <person name="Gabel C."/>
            <person name="Goble A."/>
            <person name="Goffeau A."/>
            <person name="Harris D."/>
            <person name="Hertz-Fowler C."/>
            <person name="Hilbert H."/>
            <person name="Horn D."/>
            <person name="Huang Y."/>
            <person name="Klages S."/>
            <person name="Knights A."/>
            <person name="Kube M."/>
            <person name="Larke N."/>
            <person name="Litvin L."/>
            <person name="Lord A."/>
            <person name="Louie T."/>
            <person name="Marra M."/>
            <person name="Masuy D."/>
            <person name="Matthews K."/>
            <person name="Michaeli S."/>
            <person name="Mottram J.C."/>
            <person name="Mueller-Auer S."/>
            <person name="Munden H."/>
            <person name="Nelson S."/>
            <person name="Norbertczak H."/>
            <person name="Oliver K."/>
            <person name="O'neil S."/>
            <person name="Pentony M."/>
            <person name="Pohl T.M."/>
            <person name="Price C."/>
            <person name="Purnelle B."/>
            <person name="Quail M.A."/>
            <person name="Rabbinowitsch E."/>
            <person name="Reinhardt R."/>
            <person name="Rieger M."/>
            <person name="Rinta J."/>
            <person name="Robben J."/>
            <person name="Robertson L."/>
            <person name="Ruiz J.C."/>
            <person name="Rutter S."/>
            <person name="Saunders D."/>
            <person name="Schaefer M."/>
            <person name="Schein J."/>
            <person name="Schwartz D.C."/>
            <person name="Seeger K."/>
            <person name="Seyler A."/>
            <person name="Sharp S."/>
            <person name="Shin H."/>
            <person name="Sivam D."/>
            <person name="Squares R."/>
            <person name="Squares S."/>
            <person name="Tosato V."/>
            <person name="Vogt C."/>
            <person name="Volckaert G."/>
            <person name="Wambutt R."/>
            <person name="Warren T."/>
            <person name="Wedler H."/>
            <person name="Woodward J."/>
            <person name="Zhou S."/>
            <person name="Zimmermann W."/>
            <person name="Smith D.F."/>
            <person name="Blackwell J.M."/>
            <person name="Stuart K.D."/>
            <person name="Barrell B.G."/>
            <person name="Myler P.J."/>
        </authorList>
    </citation>
    <scope>NUCLEOTIDE SEQUENCE [LARGE SCALE GENOMIC DNA]</scope>
    <source>
        <strain>MHOM/IL/81/Friedlin</strain>
    </source>
</reference>
<reference evidence="5" key="2">
    <citation type="journal article" date="2017" name="Infect. Immun.">
        <title>Characterization of the protein tyrosine phosphatase LmPRL-1 secreted by Leishmania major via the exosome pathway.</title>
        <authorList>
            <person name="Leitherer S."/>
            <person name="Clos J."/>
            <person name="Liebler-Tenorio E.M."/>
            <person name="Schleicher U."/>
            <person name="Bogdan C."/>
            <person name="Soulat D."/>
        </authorList>
    </citation>
    <scope>FUNCTION</scope>
    <scope>CATALYTIC ACTIVITY</scope>
    <scope>ACTIVITY REGULATION</scope>
    <scope>BIOPHYSICOCHEMICAL PROPERTIES</scope>
    <scope>SUBCELLULAR LOCATION</scope>
    <scope>DEVELOPMENTAL STAGE</scope>
    <scope>DISULFIDE BOND</scope>
    <scope>ISOPRENYLATION AT CYS-172</scope>
    <scope>MUTAGENESIS OF CYS-53; CYS-114 AND CYS-172</scope>
</reference>
<reference evidence="10" key="3">
    <citation type="submission" date="2011-05" db="PDB data bank">
        <title>Protein tyrosine phosphatase from Leishmania major.</title>
        <authorList>
            <person name="Merritt E.A."/>
            <person name="Arakaki T."/>
            <person name="Neely H."/>
            <person name="Phizicky E."/>
            <person name="Quartley E."/>
            <person name="Van Voorhis W.C."/>
            <person name="Buckner F.S."/>
            <person name="Fan E."/>
            <person name="Zucker F."/>
            <person name="Verlinde C.L.M.J."/>
            <person name="Hol W.G.J."/>
        </authorList>
    </citation>
    <scope>X-RAY CRYSTALLOGRAPHY (2.30 ANGSTROMS) OF 4-165 IN COMPLEX WITH SUBSTRATE ANALOG THIOSULFATE</scope>
    <scope>DISULFIDE BONDS</scope>
</reference>
<name>PRL1_LEIMA</name>
<evidence type="ECO:0000255" key="1">
    <source>
        <dbReference type="PROSITE-ProRule" id="PRU00160"/>
    </source>
</evidence>
<evidence type="ECO:0000269" key="2">
    <source>
    </source>
</evidence>
<evidence type="ECO:0000269" key="3">
    <source ref="3"/>
</evidence>
<evidence type="ECO:0000303" key="4">
    <source>
    </source>
</evidence>
<evidence type="ECO:0000305" key="5"/>
<evidence type="ECO:0000305" key="6">
    <source>
    </source>
</evidence>
<evidence type="ECO:0000305" key="7">
    <source ref="3"/>
</evidence>
<evidence type="ECO:0000312" key="8">
    <source>
        <dbReference type="EMBL" id="CAJ03450.1"/>
    </source>
</evidence>
<evidence type="ECO:0000312" key="9">
    <source>
        <dbReference type="Proteomes" id="UP000000542"/>
    </source>
</evidence>
<evidence type="ECO:0007744" key="10">
    <source>
        <dbReference type="PDB" id="3S4O"/>
    </source>
</evidence>
<evidence type="ECO:0007829" key="11">
    <source>
        <dbReference type="PDB" id="3S4O"/>
    </source>
</evidence>
<protein>
    <recommendedName>
        <fullName evidence="5">Protein tyrosine phosphatase PRL-1</fullName>
        <ecNumber evidence="2">3.1.3.48</ecNumber>
    </recommendedName>
</protein>
<dbReference type="EC" id="3.1.3.48" evidence="2"/>
<dbReference type="EMBL" id="FR796412">
    <property type="protein sequence ID" value="CAJ03450.1"/>
    <property type="molecule type" value="Genomic_DNA"/>
</dbReference>
<dbReference type="RefSeq" id="XP_001682101.1">
    <property type="nucleotide sequence ID" value="XM_001682049.1"/>
</dbReference>
<dbReference type="PDB" id="3S4O">
    <property type="method" value="X-ray"/>
    <property type="resolution" value="2.30 A"/>
    <property type="chains" value="A/B=4-165"/>
</dbReference>
<dbReference type="PDBsum" id="3S4O"/>
<dbReference type="SMR" id="Q4QEZ7"/>
<dbReference type="EnsemblProtists" id="CAJ03450">
    <property type="protein sequence ID" value="CAJ03450"/>
    <property type="gene ID" value="LMJF_16_0230"/>
</dbReference>
<dbReference type="GeneID" id="5650568"/>
<dbReference type="KEGG" id="lma:LMJF_16_0230"/>
<dbReference type="VEuPathDB" id="TriTrypDB:LmjF.16.0230"/>
<dbReference type="VEuPathDB" id="TriTrypDB:LMJFC_160007600"/>
<dbReference type="VEuPathDB" id="TriTrypDB:LMJLV39_160007500"/>
<dbReference type="VEuPathDB" id="TriTrypDB:LMJSD75_160007500"/>
<dbReference type="eggNOG" id="KOG2836">
    <property type="taxonomic scope" value="Eukaryota"/>
</dbReference>
<dbReference type="HOGENOM" id="CLU_099263_2_0_1"/>
<dbReference type="InParanoid" id="Q4QEZ7"/>
<dbReference type="OMA" id="GIEVHSW"/>
<dbReference type="BRENDA" id="3.1.3.48">
    <property type="organism ID" value="2950"/>
</dbReference>
<dbReference type="EvolutionaryTrace" id="Q4QEZ7"/>
<dbReference type="Proteomes" id="UP000000542">
    <property type="component" value="Chromosome 16"/>
</dbReference>
<dbReference type="GO" id="GO:0005737">
    <property type="term" value="C:cytoplasm"/>
    <property type="evidence" value="ECO:0000314"/>
    <property type="project" value="UniProtKB"/>
</dbReference>
<dbReference type="GO" id="GO:0005829">
    <property type="term" value="C:cytosol"/>
    <property type="evidence" value="ECO:0000314"/>
    <property type="project" value="GeneDB"/>
</dbReference>
<dbReference type="GO" id="GO:0070062">
    <property type="term" value="C:extracellular exosome"/>
    <property type="evidence" value="ECO:0000314"/>
    <property type="project" value="UniProtKB"/>
</dbReference>
<dbReference type="GO" id="GO:0030430">
    <property type="term" value="C:host cell cytoplasm"/>
    <property type="evidence" value="ECO:0000314"/>
    <property type="project" value="UniProtKB"/>
</dbReference>
<dbReference type="GO" id="GO:0020023">
    <property type="term" value="C:kinetoplast"/>
    <property type="evidence" value="ECO:0000314"/>
    <property type="project" value="UniProtKB"/>
</dbReference>
<dbReference type="GO" id="GO:0005634">
    <property type="term" value="C:nucleus"/>
    <property type="evidence" value="ECO:0000318"/>
    <property type="project" value="GO_Central"/>
</dbReference>
<dbReference type="GO" id="GO:0016791">
    <property type="term" value="F:phosphatase activity"/>
    <property type="evidence" value="ECO:0000314"/>
    <property type="project" value="UniProtKB"/>
</dbReference>
<dbReference type="GO" id="GO:0004725">
    <property type="term" value="F:protein tyrosine phosphatase activity"/>
    <property type="evidence" value="ECO:0000314"/>
    <property type="project" value="GeneDB"/>
</dbReference>
<dbReference type="GO" id="GO:0016311">
    <property type="term" value="P:dephosphorylation"/>
    <property type="evidence" value="ECO:0000314"/>
    <property type="project" value="UniProtKB"/>
</dbReference>
<dbReference type="CDD" id="cd14500">
    <property type="entry name" value="PTP-IVa"/>
    <property type="match status" value="1"/>
</dbReference>
<dbReference type="FunFam" id="3.90.190.10:FF:000086">
    <property type="entry name" value="Protein tyrosine phosphatase-like protein"/>
    <property type="match status" value="1"/>
</dbReference>
<dbReference type="Gene3D" id="3.90.190.10">
    <property type="entry name" value="Protein tyrosine phosphatase superfamily"/>
    <property type="match status" value="1"/>
</dbReference>
<dbReference type="InterPro" id="IPR029021">
    <property type="entry name" value="Prot-tyrosine_phosphatase-like"/>
</dbReference>
<dbReference type="InterPro" id="IPR050561">
    <property type="entry name" value="PTP"/>
</dbReference>
<dbReference type="InterPro" id="IPR057023">
    <property type="entry name" value="PTP-SAK"/>
</dbReference>
<dbReference type="InterPro" id="IPR003595">
    <property type="entry name" value="Tyr_Pase_cat"/>
</dbReference>
<dbReference type="InterPro" id="IPR000387">
    <property type="entry name" value="Tyr_Pase_dom"/>
</dbReference>
<dbReference type="InterPro" id="IPR020422">
    <property type="entry name" value="TYR_PHOSPHATASE_DUAL_dom"/>
</dbReference>
<dbReference type="PANTHER" id="PTHR23339">
    <property type="entry name" value="TYROSINE SPECIFIC PROTEIN PHOSPHATASE AND DUAL SPECIFICITY PROTEIN PHOSPHATASE"/>
    <property type="match status" value="1"/>
</dbReference>
<dbReference type="Pfam" id="PF22784">
    <property type="entry name" value="PTP-SAK"/>
    <property type="match status" value="1"/>
</dbReference>
<dbReference type="SMART" id="SM00404">
    <property type="entry name" value="PTPc_motif"/>
    <property type="match status" value="1"/>
</dbReference>
<dbReference type="SUPFAM" id="SSF52799">
    <property type="entry name" value="(Phosphotyrosine protein) phosphatases II"/>
    <property type="match status" value="1"/>
</dbReference>
<dbReference type="PROSITE" id="PS50056">
    <property type="entry name" value="TYR_PHOSPHATASE_2"/>
    <property type="match status" value="1"/>
</dbReference>
<dbReference type="PROSITE" id="PS50054">
    <property type="entry name" value="TYR_PHOSPHATASE_DUAL"/>
    <property type="match status" value="1"/>
</dbReference>
<sequence length="175" mass="19376">MEVNATLIDCCDPQKPSRVLFHFLILDAPSPSNLPTYIKELQHRGVRHLVRVCGPTYDATLVKSRGIDVHSWPFDDGAPPTRAVLDSWLKLLDTELARQQEDPSVPPPTIGVHCVAGLGRAPILVALALVEYGNVSALDAIALIREKRKGAINQTQMHWITKYKRRHQGAGCVIM</sequence>
<feature type="chain" id="PRO_0000441637" description="Protein tyrosine phosphatase PRL-1">
    <location>
        <begin position="1"/>
        <end position="172"/>
    </location>
</feature>
<feature type="propeptide" id="PRO_0000441640" description="Removed in mature form" evidence="5">
    <location>
        <begin position="173"/>
        <end position="175"/>
    </location>
</feature>
<feature type="domain" description="Tyrosine-protein phosphatase" evidence="1">
    <location>
        <begin position="15"/>
        <end position="172"/>
    </location>
</feature>
<feature type="active site" description="Proton donor" evidence="5">
    <location>
        <position position="76"/>
    </location>
</feature>
<feature type="active site" description="Phosphocysteine intermediate" evidence="1">
    <location>
        <position position="114"/>
    </location>
</feature>
<feature type="binding site" evidence="7">
    <location>
        <begin position="116"/>
        <end position="120"/>
    </location>
    <ligand>
        <name>substrate</name>
    </ligand>
</feature>
<feature type="modified residue" description="Cysteine methyl ester" evidence="5">
    <location>
        <position position="172"/>
    </location>
</feature>
<feature type="lipid moiety-binding region" description="S-farnesyl cysteine" evidence="6">
    <location>
        <position position="172"/>
    </location>
</feature>
<feature type="disulfide bond" evidence="2 3 10">
    <location>
        <begin position="53"/>
        <end position="114"/>
    </location>
</feature>
<feature type="mutagenesis site" description="Increases catalytic activity." evidence="2">
    <original>C</original>
    <variation>S</variation>
    <location>
        <position position="53"/>
    </location>
</feature>
<feature type="mutagenesis site" description="Loss of catalytic activity." evidence="2">
    <original>C</original>
    <variation>S</variation>
    <location>
        <position position="114"/>
    </location>
</feature>
<feature type="mutagenesis site" description="Probable loss of farnesylation. Loss of kinetoplast localization. Does not affect exosome localization." evidence="2">
    <original>C</original>
    <variation>S</variation>
    <location>
        <position position="172"/>
    </location>
</feature>
<feature type="strand" evidence="11">
    <location>
        <begin position="5"/>
        <end position="11"/>
    </location>
</feature>
<feature type="strand" evidence="11">
    <location>
        <begin position="18"/>
        <end position="26"/>
    </location>
</feature>
<feature type="helix" evidence="11">
    <location>
        <begin position="31"/>
        <end position="33"/>
    </location>
</feature>
<feature type="helix" evidence="11">
    <location>
        <begin position="34"/>
        <end position="42"/>
    </location>
</feature>
<feature type="turn" evidence="11">
    <location>
        <begin position="43"/>
        <end position="45"/>
    </location>
</feature>
<feature type="strand" evidence="11">
    <location>
        <begin position="46"/>
        <end position="51"/>
    </location>
</feature>
<feature type="helix" evidence="11">
    <location>
        <begin position="60"/>
        <end position="63"/>
    </location>
</feature>
<feature type="turn" evidence="11">
    <location>
        <begin position="64"/>
        <end position="66"/>
    </location>
</feature>
<feature type="strand" evidence="11">
    <location>
        <begin position="68"/>
        <end position="71"/>
    </location>
</feature>
<feature type="helix" evidence="11">
    <location>
        <begin position="82"/>
        <end position="101"/>
    </location>
</feature>
<feature type="strand" evidence="11">
    <location>
        <begin position="109"/>
        <end position="113"/>
    </location>
</feature>
<feature type="strand" evidence="11">
    <location>
        <begin position="115"/>
        <end position="119"/>
    </location>
</feature>
<feature type="helix" evidence="11">
    <location>
        <begin position="120"/>
        <end position="131"/>
    </location>
</feature>
<feature type="helix" evidence="11">
    <location>
        <begin position="137"/>
        <end position="147"/>
    </location>
</feature>
<feature type="helix" evidence="11">
    <location>
        <begin position="154"/>
        <end position="162"/>
    </location>
</feature>
<accession>Q4QEZ7</accession>